<dbReference type="GO" id="GO:0030414">
    <property type="term" value="F:peptidase inhibitor activity"/>
    <property type="evidence" value="ECO:0007669"/>
    <property type="project" value="UniProtKB-KW"/>
</dbReference>
<proteinExistence type="evidence at protein level"/>
<name>LASI1_LUPAL</name>
<keyword id="KW-0903">Direct protein sequencing</keyword>
<keyword id="KW-0481">Metalloenzyme inhibitor</keyword>
<keyword id="KW-0483">Metalloprotease inhibitor</keyword>
<keyword id="KW-0646">Protease inhibitor</keyword>
<comment type="function">
    <text evidence="2">Metalloproteinase inhibitor, active on a globulinase from L.albus seeds, thermolysin and gelatinase B.</text>
</comment>
<evidence type="ECO:0000256" key="1">
    <source>
        <dbReference type="SAM" id="MobiDB-lite"/>
    </source>
</evidence>
<evidence type="ECO:0000269" key="2">
    <source ref="1"/>
</evidence>
<evidence type="ECO:0000303" key="3">
    <source ref="1"/>
</evidence>
<evidence type="ECO:0000305" key="4"/>
<sequence>IEPERQEEEEEETRQRVRRGQVRQQQQ</sequence>
<reference evidence="4" key="1">
    <citation type="submission" date="2006-04" db="UniProtKB">
        <title>Lupinus albus metalloproteinase inhibitor-1.</title>
        <authorList>
            <person name="Carrilho D.M.P."/>
            <person name="Duque-Magalhaes M.C."/>
        </authorList>
    </citation>
    <scope>PROTEIN SEQUENCE</scope>
    <scope>FUNCTION</scope>
    <source>
        <strain evidence="2">cv. Rio Maior</strain>
        <tissue evidence="2">Cotyledon</tissue>
    </source>
</reference>
<accession>P84852</accession>
<protein>
    <recommendedName>
        <fullName>Metalloproteinase inhibitor 1</fullName>
        <shortName>LASI-1</shortName>
    </recommendedName>
</protein>
<feature type="chain" id="PRO_0000312769" description="Metalloproteinase inhibitor 1">
    <location>
        <begin position="1"/>
        <end position="27" status="greater than"/>
    </location>
</feature>
<feature type="region of interest" description="Disordered" evidence="1">
    <location>
        <begin position="1"/>
        <end position="27"/>
    </location>
</feature>
<feature type="compositionally biased region" description="Acidic residues" evidence="1">
    <location>
        <begin position="1"/>
        <end position="12"/>
    </location>
</feature>
<feature type="unsure residue" description="Q or T" evidence="2">
    <location>
        <position position="15"/>
    </location>
</feature>
<feature type="unsure residue" description="V or S" evidence="2">
    <location>
        <position position="17"/>
    </location>
</feature>
<feature type="unsure residue" description="Q or T" evidence="2">
    <location>
        <position position="21"/>
    </location>
</feature>
<feature type="unsure residue" description="R or H" evidence="2">
    <location>
        <position position="23"/>
    </location>
</feature>
<feature type="unsure residue" description="Q or G" evidence="2">
    <location>
        <position position="24"/>
    </location>
</feature>
<feature type="non-terminal residue" evidence="3">
    <location>
        <position position="27"/>
    </location>
</feature>
<organism>
    <name type="scientific">Lupinus albus</name>
    <name type="common">White lupine</name>
    <name type="synonym">Lupinus termis</name>
    <dbReference type="NCBI Taxonomy" id="3870"/>
    <lineage>
        <taxon>Eukaryota</taxon>
        <taxon>Viridiplantae</taxon>
        <taxon>Streptophyta</taxon>
        <taxon>Embryophyta</taxon>
        <taxon>Tracheophyta</taxon>
        <taxon>Spermatophyta</taxon>
        <taxon>Magnoliopsida</taxon>
        <taxon>eudicotyledons</taxon>
        <taxon>Gunneridae</taxon>
        <taxon>Pentapetalae</taxon>
        <taxon>rosids</taxon>
        <taxon>fabids</taxon>
        <taxon>Fabales</taxon>
        <taxon>Fabaceae</taxon>
        <taxon>Papilionoideae</taxon>
        <taxon>50 kb inversion clade</taxon>
        <taxon>genistoids sensu lato</taxon>
        <taxon>core genistoids</taxon>
        <taxon>Genisteae</taxon>
        <taxon>Lupinus</taxon>
    </lineage>
</organism>